<accession>A9R1Y4</accession>
<proteinExistence type="inferred from homology"/>
<gene>
    <name evidence="1" type="primary">aroQ</name>
    <name type="ordered locus">YpAngola_A1203</name>
</gene>
<protein>
    <recommendedName>
        <fullName evidence="1">3-dehydroquinate dehydratase</fullName>
        <shortName evidence="1">3-dehydroquinase</shortName>
        <ecNumber evidence="1">4.2.1.10</ecNumber>
    </recommendedName>
    <alternativeName>
        <fullName evidence="1">Type II DHQase</fullName>
    </alternativeName>
</protein>
<evidence type="ECO:0000255" key="1">
    <source>
        <dbReference type="HAMAP-Rule" id="MF_00169"/>
    </source>
</evidence>
<sequence>MSDKFHILLLNGPNLNLLGTREPEKYGYTTLAEIVSQLEIQAQGMDVALSHLQSNAEHALIDSIHQARGNTDFILINPAAFTHTSVALRDALLGVQIPFIEIHLSNVHAREPFRHHSYLSDIAVGVICGLGADGYNFALQAAVNRLSKSN</sequence>
<feature type="chain" id="PRO_1000097637" description="3-dehydroquinate dehydratase">
    <location>
        <begin position="1"/>
        <end position="150"/>
    </location>
</feature>
<feature type="active site" description="Proton acceptor" evidence="1">
    <location>
        <position position="26"/>
    </location>
</feature>
<feature type="active site" description="Proton donor" evidence="1">
    <location>
        <position position="103"/>
    </location>
</feature>
<feature type="binding site" evidence="1">
    <location>
        <position position="77"/>
    </location>
    <ligand>
        <name>substrate</name>
    </ligand>
</feature>
<feature type="binding site" evidence="1">
    <location>
        <position position="83"/>
    </location>
    <ligand>
        <name>substrate</name>
    </ligand>
</feature>
<feature type="binding site" evidence="1">
    <location>
        <position position="90"/>
    </location>
    <ligand>
        <name>substrate</name>
    </ligand>
</feature>
<feature type="binding site" evidence="1">
    <location>
        <begin position="104"/>
        <end position="105"/>
    </location>
    <ligand>
        <name>substrate</name>
    </ligand>
</feature>
<feature type="binding site" evidence="1">
    <location>
        <position position="114"/>
    </location>
    <ligand>
        <name>substrate</name>
    </ligand>
</feature>
<feature type="site" description="Transition state stabilizer" evidence="1">
    <location>
        <position position="21"/>
    </location>
</feature>
<comment type="function">
    <text evidence="1">Catalyzes a trans-dehydration via an enolate intermediate.</text>
</comment>
<comment type="catalytic activity">
    <reaction evidence="1">
        <text>3-dehydroquinate = 3-dehydroshikimate + H2O</text>
        <dbReference type="Rhea" id="RHEA:21096"/>
        <dbReference type="ChEBI" id="CHEBI:15377"/>
        <dbReference type="ChEBI" id="CHEBI:16630"/>
        <dbReference type="ChEBI" id="CHEBI:32364"/>
        <dbReference type="EC" id="4.2.1.10"/>
    </reaction>
</comment>
<comment type="pathway">
    <text evidence="1">Metabolic intermediate biosynthesis; chorismate biosynthesis; chorismate from D-erythrose 4-phosphate and phosphoenolpyruvate: step 3/7.</text>
</comment>
<comment type="subunit">
    <text evidence="1">Homododecamer.</text>
</comment>
<comment type="similarity">
    <text evidence="1">Belongs to the type-II 3-dehydroquinase family.</text>
</comment>
<keyword id="KW-0028">Amino-acid biosynthesis</keyword>
<keyword id="KW-0057">Aromatic amino acid biosynthesis</keyword>
<keyword id="KW-0456">Lyase</keyword>
<organism>
    <name type="scientific">Yersinia pestis bv. Antiqua (strain Angola)</name>
    <dbReference type="NCBI Taxonomy" id="349746"/>
    <lineage>
        <taxon>Bacteria</taxon>
        <taxon>Pseudomonadati</taxon>
        <taxon>Pseudomonadota</taxon>
        <taxon>Gammaproteobacteria</taxon>
        <taxon>Enterobacterales</taxon>
        <taxon>Yersiniaceae</taxon>
        <taxon>Yersinia</taxon>
    </lineage>
</organism>
<name>AROQ_YERPG</name>
<dbReference type="EC" id="4.2.1.10" evidence="1"/>
<dbReference type="EMBL" id="CP000901">
    <property type="protein sequence ID" value="ABX87595.1"/>
    <property type="molecule type" value="Genomic_DNA"/>
</dbReference>
<dbReference type="RefSeq" id="WP_002210071.1">
    <property type="nucleotide sequence ID" value="NZ_CP009935.1"/>
</dbReference>
<dbReference type="SMR" id="A9R1Y4"/>
<dbReference type="GeneID" id="57975085"/>
<dbReference type="KEGG" id="ypg:YpAngola_A1203"/>
<dbReference type="PATRIC" id="fig|349746.12.peg.2157"/>
<dbReference type="UniPathway" id="UPA00053">
    <property type="reaction ID" value="UER00086"/>
</dbReference>
<dbReference type="GO" id="GO:0003855">
    <property type="term" value="F:3-dehydroquinate dehydratase activity"/>
    <property type="evidence" value="ECO:0007669"/>
    <property type="project" value="UniProtKB-UniRule"/>
</dbReference>
<dbReference type="GO" id="GO:0008652">
    <property type="term" value="P:amino acid biosynthetic process"/>
    <property type="evidence" value="ECO:0007669"/>
    <property type="project" value="UniProtKB-KW"/>
</dbReference>
<dbReference type="GO" id="GO:0009073">
    <property type="term" value="P:aromatic amino acid family biosynthetic process"/>
    <property type="evidence" value="ECO:0007669"/>
    <property type="project" value="UniProtKB-KW"/>
</dbReference>
<dbReference type="GO" id="GO:0009423">
    <property type="term" value="P:chorismate biosynthetic process"/>
    <property type="evidence" value="ECO:0007669"/>
    <property type="project" value="UniProtKB-UniRule"/>
</dbReference>
<dbReference type="GO" id="GO:0019631">
    <property type="term" value="P:quinate catabolic process"/>
    <property type="evidence" value="ECO:0007669"/>
    <property type="project" value="TreeGrafter"/>
</dbReference>
<dbReference type="CDD" id="cd00466">
    <property type="entry name" value="DHQase_II"/>
    <property type="match status" value="1"/>
</dbReference>
<dbReference type="Gene3D" id="3.40.50.9100">
    <property type="entry name" value="Dehydroquinase, class II"/>
    <property type="match status" value="1"/>
</dbReference>
<dbReference type="HAMAP" id="MF_00169">
    <property type="entry name" value="AroQ"/>
    <property type="match status" value="1"/>
</dbReference>
<dbReference type="InterPro" id="IPR001874">
    <property type="entry name" value="DHquinase_II"/>
</dbReference>
<dbReference type="InterPro" id="IPR018509">
    <property type="entry name" value="DHquinase_II_CS"/>
</dbReference>
<dbReference type="InterPro" id="IPR036441">
    <property type="entry name" value="DHquinase_II_sf"/>
</dbReference>
<dbReference type="NCBIfam" id="TIGR01088">
    <property type="entry name" value="aroQ"/>
    <property type="match status" value="1"/>
</dbReference>
<dbReference type="NCBIfam" id="NF003804">
    <property type="entry name" value="PRK05395.1-1"/>
    <property type="match status" value="1"/>
</dbReference>
<dbReference type="NCBIfam" id="NF003805">
    <property type="entry name" value="PRK05395.1-2"/>
    <property type="match status" value="1"/>
</dbReference>
<dbReference type="NCBIfam" id="NF003806">
    <property type="entry name" value="PRK05395.1-3"/>
    <property type="match status" value="1"/>
</dbReference>
<dbReference type="NCBIfam" id="NF003807">
    <property type="entry name" value="PRK05395.1-4"/>
    <property type="match status" value="1"/>
</dbReference>
<dbReference type="PANTHER" id="PTHR21272">
    <property type="entry name" value="CATABOLIC 3-DEHYDROQUINASE"/>
    <property type="match status" value="1"/>
</dbReference>
<dbReference type="PANTHER" id="PTHR21272:SF3">
    <property type="entry name" value="CATABOLIC 3-DEHYDROQUINASE"/>
    <property type="match status" value="1"/>
</dbReference>
<dbReference type="Pfam" id="PF01220">
    <property type="entry name" value="DHquinase_II"/>
    <property type="match status" value="1"/>
</dbReference>
<dbReference type="PIRSF" id="PIRSF001399">
    <property type="entry name" value="DHquinase_II"/>
    <property type="match status" value="1"/>
</dbReference>
<dbReference type="SUPFAM" id="SSF52304">
    <property type="entry name" value="Type II 3-dehydroquinate dehydratase"/>
    <property type="match status" value="1"/>
</dbReference>
<dbReference type="PROSITE" id="PS01029">
    <property type="entry name" value="DEHYDROQUINASE_II"/>
    <property type="match status" value="1"/>
</dbReference>
<reference key="1">
    <citation type="journal article" date="2010" name="J. Bacteriol.">
        <title>Genome sequence of the deep-rooted Yersinia pestis strain Angola reveals new insights into the evolution and pangenome of the plague bacterium.</title>
        <authorList>
            <person name="Eppinger M."/>
            <person name="Worsham P.L."/>
            <person name="Nikolich M.P."/>
            <person name="Riley D.R."/>
            <person name="Sebastian Y."/>
            <person name="Mou S."/>
            <person name="Achtman M."/>
            <person name="Lindler L.E."/>
            <person name="Ravel J."/>
        </authorList>
    </citation>
    <scope>NUCLEOTIDE SEQUENCE [LARGE SCALE GENOMIC DNA]</scope>
    <source>
        <strain>Angola</strain>
    </source>
</reference>